<organism>
    <name type="scientific">Erwinia tasmaniensis (strain DSM 17950 / CFBP 7177 / CIP 109463 / NCPPB 4357 / Et1/99)</name>
    <dbReference type="NCBI Taxonomy" id="465817"/>
    <lineage>
        <taxon>Bacteria</taxon>
        <taxon>Pseudomonadati</taxon>
        <taxon>Pseudomonadota</taxon>
        <taxon>Gammaproteobacteria</taxon>
        <taxon>Enterobacterales</taxon>
        <taxon>Erwiniaceae</taxon>
        <taxon>Erwinia</taxon>
    </lineage>
</organism>
<evidence type="ECO:0000255" key="1">
    <source>
        <dbReference type="HAMAP-Rule" id="MF_00248"/>
    </source>
</evidence>
<proteinExistence type="inferred from homology"/>
<reference key="1">
    <citation type="journal article" date="2008" name="Environ. Microbiol.">
        <title>The genome of Erwinia tasmaniensis strain Et1/99, a non-pathogenic bacterium in the genus Erwinia.</title>
        <authorList>
            <person name="Kube M."/>
            <person name="Migdoll A.M."/>
            <person name="Mueller I."/>
            <person name="Kuhl H."/>
            <person name="Beck A."/>
            <person name="Reinhardt R."/>
            <person name="Geider K."/>
        </authorList>
    </citation>
    <scope>NUCLEOTIDE SEQUENCE [LARGE SCALE GENOMIC DNA]</scope>
    <source>
        <strain>DSM 17950 / CFBP 7177 / CIP 109463 / NCPPB 4357 / Et1/99</strain>
    </source>
</reference>
<keyword id="KW-0021">Allosteric enzyme</keyword>
<keyword id="KW-0963">Cytoplasm</keyword>
<keyword id="KW-0378">Hydrolase</keyword>
<keyword id="KW-0479">Metal-binding</keyword>
<keyword id="KW-0645">Protease</keyword>
<keyword id="KW-1185">Reference proteome</keyword>
<keyword id="KW-0915">Sodium</keyword>
<keyword id="KW-0888">Threonine protease</keyword>
<name>HSLV_ERWT9</name>
<accession>B2VF49</accession>
<gene>
    <name evidence="1" type="primary">hslV</name>
    <name type="ordered locus">ETA_01190</name>
</gene>
<protein>
    <recommendedName>
        <fullName evidence="1">ATP-dependent protease subunit HslV</fullName>
        <ecNumber evidence="1">3.4.25.2</ecNumber>
    </recommendedName>
</protein>
<sequence>MTTIVSVRRNGQVVIGGDGQATLGNTVMKGNVKKVRRLYNDKVIAGFAGGTADAFTLFELFERKLEMHQGHLVKAAVELAKDWRTDRMLRKLEALLAVADENASLIITGNGDVIQPENDLIAIGSGGPYAQAAARALLENTDIGARDIVEKALGIAGDICIYTNHNLTIEELSSKA</sequence>
<feature type="chain" id="PRO_1000100893" description="ATP-dependent protease subunit HslV">
    <location>
        <begin position="1"/>
        <end position="176"/>
    </location>
</feature>
<feature type="active site" evidence="1">
    <location>
        <position position="2"/>
    </location>
</feature>
<feature type="binding site" evidence="1">
    <location>
        <position position="157"/>
    </location>
    <ligand>
        <name>Na(+)</name>
        <dbReference type="ChEBI" id="CHEBI:29101"/>
    </ligand>
</feature>
<feature type="binding site" evidence="1">
    <location>
        <position position="160"/>
    </location>
    <ligand>
        <name>Na(+)</name>
        <dbReference type="ChEBI" id="CHEBI:29101"/>
    </ligand>
</feature>
<feature type="binding site" evidence="1">
    <location>
        <position position="163"/>
    </location>
    <ligand>
        <name>Na(+)</name>
        <dbReference type="ChEBI" id="CHEBI:29101"/>
    </ligand>
</feature>
<comment type="function">
    <text evidence="1">Protease subunit of a proteasome-like degradation complex believed to be a general protein degrading machinery.</text>
</comment>
<comment type="catalytic activity">
    <reaction evidence="1">
        <text>ATP-dependent cleavage of peptide bonds with broad specificity.</text>
        <dbReference type="EC" id="3.4.25.2"/>
    </reaction>
</comment>
<comment type="activity regulation">
    <text evidence="1">Allosterically activated by HslU binding.</text>
</comment>
<comment type="subunit">
    <text evidence="1">A double ring-shaped homohexamer of HslV is capped on each side by a ring-shaped HslU homohexamer. The assembly of the HslU/HslV complex is dependent on binding of ATP.</text>
</comment>
<comment type="subcellular location">
    <subcellularLocation>
        <location evidence="1">Cytoplasm</location>
    </subcellularLocation>
</comment>
<comment type="similarity">
    <text evidence="1">Belongs to the peptidase T1B family. HslV subfamily.</text>
</comment>
<dbReference type="EC" id="3.4.25.2" evidence="1"/>
<dbReference type="EMBL" id="CU468135">
    <property type="protein sequence ID" value="CAO95165.1"/>
    <property type="molecule type" value="Genomic_DNA"/>
</dbReference>
<dbReference type="RefSeq" id="WP_012439891.1">
    <property type="nucleotide sequence ID" value="NC_010694.1"/>
</dbReference>
<dbReference type="SMR" id="B2VF49"/>
<dbReference type="STRING" id="465817.ETA_01190"/>
<dbReference type="MEROPS" id="T01.006"/>
<dbReference type="KEGG" id="eta:ETA_01190"/>
<dbReference type="eggNOG" id="COG5405">
    <property type="taxonomic scope" value="Bacteria"/>
</dbReference>
<dbReference type="HOGENOM" id="CLU_093872_1_0_6"/>
<dbReference type="OrthoDB" id="9804884at2"/>
<dbReference type="Proteomes" id="UP000001726">
    <property type="component" value="Chromosome"/>
</dbReference>
<dbReference type="GO" id="GO:0009376">
    <property type="term" value="C:HslUV protease complex"/>
    <property type="evidence" value="ECO:0007669"/>
    <property type="project" value="UniProtKB-UniRule"/>
</dbReference>
<dbReference type="GO" id="GO:0005839">
    <property type="term" value="C:proteasome core complex"/>
    <property type="evidence" value="ECO:0007669"/>
    <property type="project" value="InterPro"/>
</dbReference>
<dbReference type="GO" id="GO:0046872">
    <property type="term" value="F:metal ion binding"/>
    <property type="evidence" value="ECO:0007669"/>
    <property type="project" value="UniProtKB-KW"/>
</dbReference>
<dbReference type="GO" id="GO:0004298">
    <property type="term" value="F:threonine-type endopeptidase activity"/>
    <property type="evidence" value="ECO:0007669"/>
    <property type="project" value="UniProtKB-KW"/>
</dbReference>
<dbReference type="GO" id="GO:0051603">
    <property type="term" value="P:proteolysis involved in protein catabolic process"/>
    <property type="evidence" value="ECO:0007669"/>
    <property type="project" value="InterPro"/>
</dbReference>
<dbReference type="CDD" id="cd01913">
    <property type="entry name" value="protease_HslV"/>
    <property type="match status" value="1"/>
</dbReference>
<dbReference type="FunFam" id="3.60.20.10:FF:000002">
    <property type="entry name" value="ATP-dependent protease subunit HslV"/>
    <property type="match status" value="1"/>
</dbReference>
<dbReference type="Gene3D" id="3.60.20.10">
    <property type="entry name" value="Glutamine Phosphoribosylpyrophosphate, subunit 1, domain 1"/>
    <property type="match status" value="1"/>
</dbReference>
<dbReference type="HAMAP" id="MF_00248">
    <property type="entry name" value="HslV"/>
    <property type="match status" value="1"/>
</dbReference>
<dbReference type="InterPro" id="IPR022281">
    <property type="entry name" value="ATP-dep_Prtase_HsIV_su"/>
</dbReference>
<dbReference type="InterPro" id="IPR029055">
    <property type="entry name" value="Ntn_hydrolases_N"/>
</dbReference>
<dbReference type="InterPro" id="IPR001353">
    <property type="entry name" value="Proteasome_sua/b"/>
</dbReference>
<dbReference type="InterPro" id="IPR023333">
    <property type="entry name" value="Proteasome_suB-type"/>
</dbReference>
<dbReference type="NCBIfam" id="TIGR03692">
    <property type="entry name" value="ATP_dep_HslV"/>
    <property type="match status" value="1"/>
</dbReference>
<dbReference type="NCBIfam" id="NF003964">
    <property type="entry name" value="PRK05456.1"/>
    <property type="match status" value="1"/>
</dbReference>
<dbReference type="PANTHER" id="PTHR32194:SF0">
    <property type="entry name" value="ATP-DEPENDENT PROTEASE SUBUNIT HSLV"/>
    <property type="match status" value="1"/>
</dbReference>
<dbReference type="PANTHER" id="PTHR32194">
    <property type="entry name" value="METALLOPROTEASE TLDD"/>
    <property type="match status" value="1"/>
</dbReference>
<dbReference type="Pfam" id="PF00227">
    <property type="entry name" value="Proteasome"/>
    <property type="match status" value="1"/>
</dbReference>
<dbReference type="PIRSF" id="PIRSF039093">
    <property type="entry name" value="HslV"/>
    <property type="match status" value="1"/>
</dbReference>
<dbReference type="SUPFAM" id="SSF56235">
    <property type="entry name" value="N-terminal nucleophile aminohydrolases (Ntn hydrolases)"/>
    <property type="match status" value="1"/>
</dbReference>
<dbReference type="PROSITE" id="PS51476">
    <property type="entry name" value="PROTEASOME_BETA_2"/>
    <property type="match status" value="1"/>
</dbReference>